<proteinExistence type="inferred from homology"/>
<dbReference type="EMBL" id="AY597011">
    <property type="protein sequence ID" value="AAT98584.1"/>
    <property type="molecule type" value="Genomic_RNA"/>
</dbReference>
<dbReference type="RefSeq" id="YP_173241.1">
    <property type="nucleotide sequence ID" value="NC_006577.2"/>
</dbReference>
<dbReference type="SMR" id="Q5MQC7"/>
<dbReference type="DNASU" id="3200428"/>
<dbReference type="GeneID" id="3200428"/>
<dbReference type="KEGG" id="vg:3200428"/>
<dbReference type="Proteomes" id="UP000008170">
    <property type="component" value="Segment"/>
</dbReference>
<dbReference type="GO" id="GO:0044178">
    <property type="term" value="C:host cell Golgi membrane"/>
    <property type="evidence" value="ECO:0007669"/>
    <property type="project" value="UniProtKB-SubCell"/>
</dbReference>
<dbReference type="GO" id="GO:0016020">
    <property type="term" value="C:membrane"/>
    <property type="evidence" value="ECO:0007669"/>
    <property type="project" value="UniProtKB-UniRule"/>
</dbReference>
<dbReference type="GO" id="GO:0019031">
    <property type="term" value="C:viral envelope"/>
    <property type="evidence" value="ECO:0007669"/>
    <property type="project" value="UniProtKB-UniRule"/>
</dbReference>
<dbReference type="GO" id="GO:0055036">
    <property type="term" value="C:virion membrane"/>
    <property type="evidence" value="ECO:0007669"/>
    <property type="project" value="UniProtKB-SubCell"/>
</dbReference>
<dbReference type="GO" id="GO:0039660">
    <property type="term" value="F:structural constituent of virion"/>
    <property type="evidence" value="ECO:0007669"/>
    <property type="project" value="UniProtKB-UniRule"/>
</dbReference>
<dbReference type="CDD" id="cd21568">
    <property type="entry name" value="HCoV-like_M"/>
    <property type="match status" value="1"/>
</dbReference>
<dbReference type="HAMAP" id="MF_04202">
    <property type="entry name" value="BETA_CORONA_M"/>
    <property type="match status" value="1"/>
</dbReference>
<dbReference type="InterPro" id="IPR002574">
    <property type="entry name" value="M_CoV"/>
</dbReference>
<dbReference type="InterPro" id="IPR044362">
    <property type="entry name" value="M_HCoV-like"/>
</dbReference>
<dbReference type="Pfam" id="PF01635">
    <property type="entry name" value="CoV_M"/>
    <property type="match status" value="1"/>
</dbReference>
<dbReference type="PROSITE" id="PS51927">
    <property type="entry name" value="COV_M"/>
    <property type="match status" value="1"/>
</dbReference>
<keyword id="KW-0325">Glycoprotein</keyword>
<keyword id="KW-1040">Host Golgi apparatus</keyword>
<keyword id="KW-1043">Host membrane</keyword>
<keyword id="KW-0945">Host-virus interaction</keyword>
<keyword id="KW-0472">Membrane</keyword>
<keyword id="KW-0812">Transmembrane</keyword>
<keyword id="KW-1133">Transmembrane helix</keyword>
<keyword id="KW-0261">Viral envelope protein</keyword>
<keyword id="KW-0899">Viral immunoevasion</keyword>
<keyword id="KW-0468">Viral matrix protein</keyword>
<keyword id="KW-0946">Virion</keyword>
<protein>
    <recommendedName>
        <fullName evidence="1">Membrane protein</fullName>
        <shortName evidence="1">M protein</shortName>
    </recommendedName>
    <alternativeName>
        <fullName evidence="1">E1 glycoprotein</fullName>
    </alternativeName>
    <alternativeName>
        <fullName evidence="1">Matrix glycoprotein</fullName>
    </alternativeName>
    <alternativeName>
        <fullName evidence="1">Membrane glycoprotein</fullName>
    </alternativeName>
</protein>
<feature type="chain" id="PRO_0000297815" description="Membrane protein">
    <location>
        <begin position="1"/>
        <end position="223"/>
    </location>
</feature>
<feature type="topological domain" description="Virion surface" evidence="1">
    <location>
        <begin position="1"/>
        <end position="20"/>
    </location>
</feature>
<feature type="transmembrane region" description="Helical" evidence="1">
    <location>
        <begin position="21"/>
        <end position="41"/>
    </location>
</feature>
<feature type="topological domain" description="Intravirion" evidence="1">
    <location>
        <begin position="42"/>
        <end position="51"/>
    </location>
</feature>
<feature type="transmembrane region" description="Helical" evidence="1">
    <location>
        <begin position="52"/>
        <end position="72"/>
    </location>
</feature>
<feature type="topological domain" description="Virion surface" evidence="1">
    <location>
        <begin position="73"/>
        <end position="80"/>
    </location>
</feature>
<feature type="transmembrane region" description="Helical" evidence="1">
    <location>
        <begin position="81"/>
        <end position="101"/>
    </location>
</feature>
<feature type="topological domain" description="Intravirion" evidence="1">
    <location>
        <begin position="102"/>
        <end position="223"/>
    </location>
</feature>
<reference key="1">
    <citation type="journal article" date="2005" name="J. Virol.">
        <title>Characterization and complete genome sequence of a novel coronavirus, coronavirus HKU1, from patients with pneumonia.</title>
        <authorList>
            <person name="Woo P.C.Y."/>
            <person name="Lau S.K.P."/>
            <person name="Chu C.-M."/>
            <person name="Chan K.-H."/>
            <person name="Tsoi H.-W."/>
            <person name="Huang Y."/>
            <person name="Wong B.H.L."/>
            <person name="Poon R.W.S."/>
            <person name="Cai J.J."/>
            <person name="Luk W.-K."/>
            <person name="Poon L.L.M."/>
            <person name="Wong S.S.Y."/>
            <person name="Guan Y."/>
            <person name="Peiris J.S.M."/>
            <person name="Yuen K.-Y."/>
        </authorList>
    </citation>
    <scope>NUCLEOTIDE SEQUENCE [GENOMIC RNA]</scope>
</reference>
<accession>Q5MQC7</accession>
<organism>
    <name type="scientific">Human coronavirus HKU1 (isolate N1)</name>
    <name type="common">HCoV-HKU1</name>
    <dbReference type="NCBI Taxonomy" id="443239"/>
    <lineage>
        <taxon>Viruses</taxon>
        <taxon>Riboviria</taxon>
        <taxon>Orthornavirae</taxon>
        <taxon>Pisuviricota</taxon>
        <taxon>Pisoniviricetes</taxon>
        <taxon>Nidovirales</taxon>
        <taxon>Cornidovirineae</taxon>
        <taxon>Coronaviridae</taxon>
        <taxon>Orthocoronavirinae</taxon>
        <taxon>Betacoronavirus</taxon>
        <taxon>Embecovirus</taxon>
        <taxon>Human coronavirus HKU1</taxon>
    </lineage>
</organism>
<evidence type="ECO:0000255" key="1">
    <source>
        <dbReference type="HAMAP-Rule" id="MF_04202"/>
    </source>
</evidence>
<evidence type="ECO:0000255" key="2">
    <source>
        <dbReference type="PROSITE-ProRule" id="PRU01275"/>
    </source>
</evidence>
<gene>
    <name evidence="1" type="primary">M</name>
    <name type="ORF">6</name>
</gene>
<sequence length="223" mass="25619">MNKSFLPQFTSDQAVTFLKEWNFSLGVILLFITIILQFGYTSRSMFVYLIKMIILWLMWPLTITLTIFNCFYALNNAFLAFSIVFTIISIVIWILYFVNSIRLFIRTGSWWSFNPETNNLMCIDMKGKMFVRPVIEDYHTLTATVIRGHLYIQGVKLGTGYTLSDLPVYVTVAKVQVLCTYKRAFLDKLDVNSGFAVFVKSKVGNYRLPSSKPSGMDTALLRA</sequence>
<name>VME1_CVHN1</name>
<comment type="function">
    <text evidence="1 2">Component of the viral envelope that plays a central role in virus morphogenesis and assembly via its interactions with other viral proteins.</text>
</comment>
<comment type="subunit">
    <text evidence="1 2">Homomultimer. Interacts with envelope E protein in the budding compartment of the host cell, which is located between endoplasmic reticulum and the Golgi complex. Forms a complex with HE and S proteins. Interacts with nucleocapsid N protein. This interaction probably participates in RNA packaging into the virus.</text>
</comment>
<comment type="subcellular location">
    <subcellularLocation>
        <location evidence="1">Virion membrane</location>
        <topology evidence="1">Multi-pass membrane protein</topology>
    </subcellularLocation>
    <subcellularLocation>
        <location evidence="1">Host Golgi apparatus membrane</location>
        <topology evidence="1">Multi-pass membrane protein</topology>
    </subcellularLocation>
    <text evidence="1">Largely embedded in the lipid bilayer.</text>
</comment>
<comment type="miscellaneous">
    <text>Isolate N1 belongs to genotype A.</text>
</comment>
<comment type="similarity">
    <text evidence="1">Belongs to the betacoronaviruses M protein family.</text>
</comment>
<organismHost>
    <name type="scientific">Homo sapiens</name>
    <name type="common">Human</name>
    <dbReference type="NCBI Taxonomy" id="9606"/>
</organismHost>